<comment type="similarity">
    <text evidence="1">Belongs to the eukaryotic ribosomal protein eS4 family.</text>
</comment>
<proteinExistence type="inferred from homology"/>
<reference key="1">
    <citation type="submission" date="2007-10" db="EMBL/GenBank/DDBJ databases">
        <title>Complete sequence of Methanococcus maripaludis C6.</title>
        <authorList>
            <consortium name="US DOE Joint Genome Institute"/>
            <person name="Copeland A."/>
            <person name="Lucas S."/>
            <person name="Lapidus A."/>
            <person name="Barry K."/>
            <person name="Glavina del Rio T."/>
            <person name="Dalin E."/>
            <person name="Tice H."/>
            <person name="Pitluck S."/>
            <person name="Clum A."/>
            <person name="Schmutz J."/>
            <person name="Larimer F."/>
            <person name="Land M."/>
            <person name="Hauser L."/>
            <person name="Kyrpides N."/>
            <person name="Mikhailova N."/>
            <person name="Sieprawska-Lupa M."/>
            <person name="Whitman W.B."/>
            <person name="Richardson P."/>
        </authorList>
    </citation>
    <scope>NUCLEOTIDE SEQUENCE [LARGE SCALE GENOMIC DNA]</scope>
    <source>
        <strain>C6 / ATCC BAA-1332</strain>
    </source>
</reference>
<protein>
    <recommendedName>
        <fullName evidence="1">Small ribosomal subunit protein eS4</fullName>
    </recommendedName>
    <alternativeName>
        <fullName evidence="2">30S ribosomal protein S4e</fullName>
    </alternativeName>
</protein>
<evidence type="ECO:0000255" key="1">
    <source>
        <dbReference type="HAMAP-Rule" id="MF_00485"/>
    </source>
</evidence>
<evidence type="ECO:0000305" key="2"/>
<name>RS4E_METM6</name>
<feature type="chain" id="PRO_1000126117" description="Small ribosomal subunit protein eS4">
    <location>
        <begin position="1"/>
        <end position="244"/>
    </location>
</feature>
<feature type="domain" description="S4 RNA-binding" evidence="1">
    <location>
        <begin position="43"/>
        <end position="106"/>
    </location>
</feature>
<sequence length="244" mass="27121">MAIKGPRKHLKRLAAPANWQLPRKVKAFTVRPSPGPHSMDKSLPLLLVVRDILKYADNAREAKKIIQTGKILIDGLKRKEYKHPAGLMDVLSIPEMDENYLVLFDESGRISLKKTDKTDAKLCKIVNKTVIKGGHIQLNLHDGRNQIVKVSDATKAEEDVYKTGDSVLVSIPEQSIVGHVAFGEGKLAYITGGKHVGEFAKIVEVENRALYSDIVTLENKDGEKFKTVKPYVFIVGQDEPVISM</sequence>
<organism>
    <name type="scientific">Methanococcus maripaludis (strain C6 / ATCC BAA-1332)</name>
    <dbReference type="NCBI Taxonomy" id="444158"/>
    <lineage>
        <taxon>Archaea</taxon>
        <taxon>Methanobacteriati</taxon>
        <taxon>Methanobacteriota</taxon>
        <taxon>Methanomada group</taxon>
        <taxon>Methanococci</taxon>
        <taxon>Methanococcales</taxon>
        <taxon>Methanococcaceae</taxon>
        <taxon>Methanococcus</taxon>
    </lineage>
</organism>
<gene>
    <name evidence="1" type="primary">rps4e</name>
    <name type="ordered locus">MmarC6_1262</name>
</gene>
<keyword id="KW-0687">Ribonucleoprotein</keyword>
<keyword id="KW-0689">Ribosomal protein</keyword>
<keyword id="KW-0694">RNA-binding</keyword>
<keyword id="KW-0699">rRNA-binding</keyword>
<dbReference type="EMBL" id="CP000867">
    <property type="protein sequence ID" value="ABX02075.1"/>
    <property type="molecule type" value="Genomic_DNA"/>
</dbReference>
<dbReference type="SMR" id="A9A9Q2"/>
<dbReference type="STRING" id="444158.MmarC6_1262"/>
<dbReference type="KEGG" id="mmx:MmarC6_1262"/>
<dbReference type="eggNOG" id="arCOG04093">
    <property type="taxonomic scope" value="Archaea"/>
</dbReference>
<dbReference type="HOGENOM" id="CLU_060400_0_0_2"/>
<dbReference type="OrthoDB" id="372073at2157"/>
<dbReference type="PhylomeDB" id="A9A9Q2"/>
<dbReference type="GO" id="GO:0022627">
    <property type="term" value="C:cytosolic small ribosomal subunit"/>
    <property type="evidence" value="ECO:0007669"/>
    <property type="project" value="TreeGrafter"/>
</dbReference>
<dbReference type="GO" id="GO:0019843">
    <property type="term" value="F:rRNA binding"/>
    <property type="evidence" value="ECO:0007669"/>
    <property type="project" value="UniProtKB-KW"/>
</dbReference>
<dbReference type="GO" id="GO:0003735">
    <property type="term" value="F:structural constituent of ribosome"/>
    <property type="evidence" value="ECO:0007669"/>
    <property type="project" value="InterPro"/>
</dbReference>
<dbReference type="GO" id="GO:0006412">
    <property type="term" value="P:translation"/>
    <property type="evidence" value="ECO:0007669"/>
    <property type="project" value="UniProtKB-UniRule"/>
</dbReference>
<dbReference type="CDD" id="cd06087">
    <property type="entry name" value="KOW_RPS4"/>
    <property type="match status" value="1"/>
</dbReference>
<dbReference type="CDD" id="cd00165">
    <property type="entry name" value="S4"/>
    <property type="match status" value="1"/>
</dbReference>
<dbReference type="FunFam" id="3.10.290.10:FF:000002">
    <property type="entry name" value="40S ribosomal protein S4"/>
    <property type="match status" value="1"/>
</dbReference>
<dbReference type="Gene3D" id="2.30.30.30">
    <property type="match status" value="1"/>
</dbReference>
<dbReference type="Gene3D" id="2.40.50.740">
    <property type="match status" value="1"/>
</dbReference>
<dbReference type="Gene3D" id="3.10.290.10">
    <property type="entry name" value="RNA-binding S4 domain"/>
    <property type="match status" value="1"/>
</dbReference>
<dbReference type="HAMAP" id="MF_00485">
    <property type="entry name" value="Ribosomal_eS4"/>
    <property type="match status" value="1"/>
</dbReference>
<dbReference type="InterPro" id="IPR014722">
    <property type="entry name" value="Rib_uL2_dom2"/>
</dbReference>
<dbReference type="InterPro" id="IPR000876">
    <property type="entry name" value="Ribosomal_eS4"/>
</dbReference>
<dbReference type="InterPro" id="IPR013845">
    <property type="entry name" value="Ribosomal_eS4_central_region"/>
</dbReference>
<dbReference type="InterPro" id="IPR038237">
    <property type="entry name" value="Ribosomal_eS4_central_sf"/>
</dbReference>
<dbReference type="InterPro" id="IPR041982">
    <property type="entry name" value="Ribosomal_eS4_KOW"/>
</dbReference>
<dbReference type="InterPro" id="IPR013843">
    <property type="entry name" value="Ribosomal_eS4_N"/>
</dbReference>
<dbReference type="InterPro" id="IPR018199">
    <property type="entry name" value="Ribosomal_eS4_N_CS"/>
</dbReference>
<dbReference type="InterPro" id="IPR036986">
    <property type="entry name" value="S4_RNA-bd_sf"/>
</dbReference>
<dbReference type="NCBIfam" id="NF003312">
    <property type="entry name" value="PRK04313.1"/>
    <property type="match status" value="1"/>
</dbReference>
<dbReference type="PANTHER" id="PTHR11581">
    <property type="entry name" value="30S/40S RIBOSOMAL PROTEIN S4"/>
    <property type="match status" value="1"/>
</dbReference>
<dbReference type="PANTHER" id="PTHR11581:SF0">
    <property type="entry name" value="SMALL RIBOSOMAL SUBUNIT PROTEIN ES4"/>
    <property type="match status" value="1"/>
</dbReference>
<dbReference type="Pfam" id="PF00900">
    <property type="entry name" value="Ribosomal_S4e"/>
    <property type="match status" value="1"/>
</dbReference>
<dbReference type="Pfam" id="PF08071">
    <property type="entry name" value="RS4NT"/>
    <property type="match status" value="1"/>
</dbReference>
<dbReference type="PIRSF" id="PIRSF002116">
    <property type="entry name" value="Ribosomal_S4"/>
    <property type="match status" value="1"/>
</dbReference>
<dbReference type="PROSITE" id="PS00528">
    <property type="entry name" value="RIBOSOMAL_S4E"/>
    <property type="match status" value="1"/>
</dbReference>
<dbReference type="PROSITE" id="PS50889">
    <property type="entry name" value="S4"/>
    <property type="match status" value="1"/>
</dbReference>
<accession>A9A9Q2</accession>